<keyword id="KW-0007">Acetylation</keyword>
<keyword id="KW-0010">Activator</keyword>
<keyword id="KW-0963">Cytoplasm</keyword>
<keyword id="KW-0238">DNA-binding</keyword>
<keyword id="KW-0539">Nucleus</keyword>
<keyword id="KW-0597">Phosphoprotein</keyword>
<keyword id="KW-1185">Reference proteome</keyword>
<keyword id="KW-0727">SH2 domain</keyword>
<keyword id="KW-0804">Transcription</keyword>
<keyword id="KW-0805">Transcription regulation</keyword>
<proteinExistence type="evidence at transcript level"/>
<gene>
    <name type="primary">STAT3</name>
</gene>
<feature type="initiator methionine" description="Removed" evidence="2">
    <location>
        <position position="1"/>
    </location>
</feature>
<feature type="chain" id="PRO_0000182416" description="Signal transducer and activator of transcription 3">
    <location>
        <begin position="2"/>
        <end position="770"/>
    </location>
</feature>
<feature type="domain" description="SH2" evidence="5">
    <location>
        <begin position="580"/>
        <end position="670"/>
    </location>
</feature>
<feature type="short sequence motif" description="Essential for nuclear import" evidence="1">
    <location>
        <begin position="150"/>
        <end position="162"/>
    </location>
</feature>
<feature type="modified residue" description="N-acetylalanine" evidence="2">
    <location>
        <position position="2"/>
    </location>
</feature>
<feature type="modified residue" description="N6-acetyllysine" evidence="2">
    <location>
        <position position="49"/>
    </location>
</feature>
<feature type="modified residue" description="N6-acetyllysine" evidence="2">
    <location>
        <position position="87"/>
    </location>
</feature>
<feature type="modified residue" description="Allysine; alternate" evidence="2">
    <location>
        <position position="601"/>
    </location>
</feature>
<feature type="modified residue" description="N6-acetyllysine; alternate" evidence="2">
    <location>
        <position position="601"/>
    </location>
</feature>
<feature type="modified residue" description="Allysine; alternate" evidence="2">
    <location>
        <position position="615"/>
    </location>
</feature>
<feature type="modified residue" description="N6-acetyllysine; alternate" evidence="2">
    <location>
        <position position="615"/>
    </location>
</feature>
<feature type="modified residue" description="Allysine; alternate" evidence="2">
    <location>
        <position position="631"/>
    </location>
</feature>
<feature type="modified residue" description="N6-acetyllysine; alternate" evidence="2">
    <location>
        <position position="631"/>
    </location>
</feature>
<feature type="modified residue" description="Phosphotyrosine; by TYK2" evidence="2">
    <location>
        <position position="640"/>
    </location>
</feature>
<feature type="modified residue" description="Allysine; alternate" evidence="2">
    <location>
        <position position="685"/>
    </location>
</feature>
<feature type="modified residue" description="N6-acetyllysine; alternate" evidence="2">
    <location>
        <position position="685"/>
    </location>
</feature>
<feature type="modified residue" description="Phosphotyrosine; by FER and PTK6" evidence="2">
    <location>
        <position position="705"/>
    </location>
</feature>
<feature type="modified residue" description="N6-acetyllysine" evidence="2">
    <location>
        <position position="707"/>
    </location>
</feature>
<feature type="modified residue" description="Phosphothreonine" evidence="2">
    <location>
        <position position="714"/>
    </location>
</feature>
<feature type="modified residue" description="Phosphoserine; by DYRK2, NLK, NEK6, IRAK1, RPS6KA5, ZIPK/DAPK3 and PKC/PRKCE" evidence="2">
    <location>
        <position position="727"/>
    </location>
</feature>
<reference key="1">
    <citation type="submission" date="2004-01" db="EMBL/GenBank/DDBJ databases">
        <title>The STAT5B-encoding gene was flipped across the STAT3/STAT5A-locus during ruminant evolution.</title>
        <authorList>
            <person name="Seyfert H.M."/>
            <person name="Wheeler T.T."/>
            <person name="Moolenaar A."/>
            <person name="Pitra C."/>
        </authorList>
    </citation>
    <scope>NUCLEOTIDE SEQUENCE [MRNA]</scope>
    <source>
        <tissue>Mammary gland</tissue>
    </source>
</reference>
<accession>P61635</accession>
<comment type="function">
    <text evidence="2 3">Signal transducer and transcription activator that mediates cellular responses to interleukins, KITLG/SCF, LEP and other growth factors. Once activated, recruits coactivators, such as NCOA1 or MED1, to the promoter region of the target gene. May mediate cellular responses to activated FGFR1, FGFR2, FGFR3 and FGFR4. Upon activation of IL6ST/gp130 signaling by interleukin-6 (IL6), binds to the IL6-responsive elements identified in the promoters of various acute-phase protein genes. Activated by IL31 through IL31RA (By similarity). Acts as a regulator of inflammatory response by regulating differentiation of naive CD4(+) T-cells into T-helper Th17 or regulatory T-cells (Treg): acetylation promotes its transcription activity and cell differentiation while deacetylation and oxidation of lysine residues by LOXL3 inhibits differentiation (By similarity). Involved in cell cycle regulation by inducing the expression of key genes for the progression from G1 to S phase, such as CCND1 (By similarity). Mediates the effects of LEP on melanocortin production, body energy homeostasis and lactation. May play an apoptotic role by transctivating BIRC5 expression under LEP activation (By similarity). Cytoplasmic STAT3 represses macroautophagy by inhibiting EIF2AK2/PKR activity (By similarity). Plays a crucial role in basal beta cell functions, such as regulation of insulin secretion. Following JAK/STAT signaling activation and as part of a complex with NFATC3 and NFATC4, binds to the alpha-beta E4 promoter region of CRYAB and activates transcription in cardiomyocytes (By similarity). Plays an important role in host defense in methicillin-resistant S.aureus lung infection by regulating the expression of the antimicrobial lectin REG3G (By similarity).</text>
</comment>
<comment type="subunit">
    <text evidence="2 3 4">Forms a homodimer or a heterodimer with a related family member (at least STAT1). Component of a promoter-binding complex composed of STAT3, NFATC3 and NFATC4; complex formation is enhanced by calcineurin (By similarity). Interacts with IL31RA, NCOA1, PELP1, SIPAR, SOCS7, STATIP1 and TMF1. Interacts with IL23R in presence of IL23. Interacts (via SH2 domain) with NLK. Interacts with ARL2BP; the interaction is enhanced by LIF and JAK1 expression (By similarity). Interacts with KPNA4 and KPNA5; KPNA4 may be the primary mediator of nuclear import (By similarity). Interacts with CAV2; the interaction is increased on insulin-induced tyrosine phosphorylation of CAV2 and leads to STAT3 activation (By similarity). Interacts with ARL2BP; interaction is enhanced with ARL2. Interacts with NEK6 (By similarity). Binds to CDK9 when activated and nuclear. Interacts with BMX. Interacts with ZIPK/DAPK3. Interacts with PIAS3; the interaction occurs on stimulation by IL6, CNTF or OSM and inhibits the DNA binding activity of STAT3. In prostate cancer cells, interacts with PRKCE and promotes DNA binding activity of STAT3 (By similarity). Interacts with STMN3, antagonizing its microtubule-destabilizing activity (By similarity). Interacts with the 'Lys-129' acetylated form of BIRC5/survivin. Interacts with FER. Interacts (via SH2 domain) with EIF2AK2/PKR (via the kinase catalytic domain) (By similarity). Interacts with FGFR4 (By similarity). Interacts with INPP5F; the interaction is independent of STAT3 Tyr-705 phosphorylation status (By similarity). Interacts with OCIAD1 and OCIAD2 (By similarity). Interacts (unphosphorylated or phosphorylated at Ser-727) with PHB1 (By similarity). Interacts and may form heterodimers with NHLH1 (By similarity). Found in a complex with SLC39A6, SLC39A10 and with the 'Ser-727' phosphorylated form of STAT3 throughout mitosis (By similarity). Interacts (when acetylated) with EP300 (via bromo domain); interaction takes place following STAT3 acetylation by EP300 and promotes enhanceosome assembly (By similarity). Interacts (when acetylated) with BRD2 (via bromo domain); interaction promotes STAT3 recruitment to chromatin and T-helper Th17 cell differentiation (By similarity). Interacts with FAM220A/SIPAR; the interaction occurs in both the nucleus and the cytoplasm, is enhanced by IL6 and promotes STAT3 dephosphorylation (By similarity). Interacts in both unphosphorylated and phosphorylated forms with FAM220A but interacts preferentially in the phosphorylated form in the nucleus (By similarity). Interacts with PTPN2; the interaction is promoted by FAM220A and leads to STAT3 dephosphorylation which negatively regulates STAT3 transcriptional activator activity (By similarity).</text>
</comment>
<comment type="subcellular location">
    <subcellularLocation>
        <location evidence="4">Cytoplasm</location>
    </subcellularLocation>
    <subcellularLocation>
        <location evidence="4">Nucleus</location>
    </subcellularLocation>
    <text evidence="2 4">Shuttles between the nucleus and the cytoplasm. Translocated into the nucleus upon tyrosine phosphorylation and dimerization, in response to signaling by activated FGFR1, FGFR2, FGFR3 or FGFR4. Constitutive nuclear presence is independent of tyrosine phosphorylation. Predominantly present in the cytoplasm without stimuli. Upon leukemia inhibitory factor (LIF) stimulation, accumulates in the nucleus (By similarity). The complex composed of BART and ARL2 plays an important role in the nuclear translocation and retention of STAT3. Translocates to the nucleus in the presence of EDN1 (By similarity).</text>
</comment>
<comment type="PTM">
    <text evidence="2 3">Activated through tyrosine phosphorylation by BMX. Tyrosine phosphorylated in response to IL-6, IL-11, CNTF, LIF, CSF-1, EGF, PDGF, IFN-alpha and OSM. Tyrosine phosphorylated in response to constitutively activated FGFR1, FGFR2, FGFR3 and FGFR4. Phosphorylated on serine upon DNA damage, probably by ATM or ATR. Serine phosphorylation is important for the formation of stable DNA-binding STAT3 homodimers and maximal transcriptional activity. ARL2BP may participate in keeping the phosphorylated state of STAT3 within the nucleus. Tyrosine phosphorylated upon stimulation with EGF. Upon LPS challenge, phosphorylated within the nucleus by IRAK1. Phosphorylated on Ser-727 by RPS6KA5 (By similarity). Dephosphorylation on tyrosine residues by PTPN2 negatively regulates IL6/interleukin-6 signaling (By similarity). Phosphorylation at Tyr-705 by FER, isoform M2 of PKM (PKM2) or PTK6 leads to an increase of its transcriptional activity (By similarity). Phosphorylation at Tyr-705 is increased in the presence of calcineurin (By similarity). Phosphorylation at Tyr-640 by TYK2 negatively regulates transcriptional activity (By similarity).</text>
</comment>
<comment type="PTM">
    <text evidence="2">Acetylated on lysine residues by EP300/p300, promoting its activation (By similarity). Acetylation at Lys-49 and Lys-87 by EP300/p300 promotes its activation (By similarity). Acetylation at Lys-87 by EP300/p300 promotes its association with BRD2 and recruitment to chromatin (By similarity). Deacetylated at Lys-49 and Lys-87 by HDAC1 (By similarity). Acetylation at Lys-685 by EP300/p300 promotes its homodimerization and activation (By similarity). Deacetylated at Lys-685 by HDAC3 (By similarity). Acetylated on lysine residues by CREBBP (By similarity). Deacetylation by LOXL3 leads to disrupt STAT3 dimerization and inhibit STAT3 transcription activity (By similarity). Oxidation of lysine residues to allysine on STAT3 preferentially takes place on lysine residues that are acetylated (By similarity).</text>
</comment>
<comment type="PTM">
    <text evidence="2">Some lysine residues are oxidized to allysine by LOXL3, leading to disrupt STAT3 dimerization and inhibit STAT3 transcription activity. Oxidation of lysine residues to allysine on STAT3 preferentially takes place on lysine residues that are acetylated.</text>
</comment>
<comment type="miscellaneous">
    <text>Involved in the gp130-mediated signaling pathway.</text>
</comment>
<comment type="similarity">
    <text evidence="6">Belongs to the transcription factor STAT family.</text>
</comment>
<evidence type="ECO:0000250" key="1"/>
<evidence type="ECO:0000250" key="2">
    <source>
        <dbReference type="UniProtKB" id="P40763"/>
    </source>
</evidence>
<evidence type="ECO:0000250" key="3">
    <source>
        <dbReference type="UniProtKB" id="P42227"/>
    </source>
</evidence>
<evidence type="ECO:0000250" key="4">
    <source>
        <dbReference type="UniProtKB" id="P52631"/>
    </source>
</evidence>
<evidence type="ECO:0000255" key="5">
    <source>
        <dbReference type="PROSITE-ProRule" id="PRU00191"/>
    </source>
</evidence>
<evidence type="ECO:0000305" key="6"/>
<sequence length="770" mass="87975">MAQWNQLQQLDTRYLEQLHQLYSDSFPMELRQLLAPWIESQDWAYAASKESHATLVFHNLLGEIDQQYSRFLQESNVLYQHNLRRIKQFLQSRYLEKPMEIARIVARCLWEESRLLQTAATAAQQGGQANHPTAAVVTEKQQMLEQHLQDVRKRVQDLEQKMKVVENLLDDFDFNYKTLKSQGDMQDLNGNNQSVTRQKMQQLEQMLTALDQMRRSIVSELAGLLSAMEYVQKTLTDEELADWKRRQQIACIGGPPNICLDRLENWITSLAESQLQTRQQIKKLEELQQKVSYKGDPIVQHRPMLEERIVELFRNLMKSAFVVERQPCMPMHPDRPLVIKTGVQFTTKVRLLVKFPELNYQLKIKVCIDKDSGDVAALRGSRKFNILGTNTKVMNMEESNNGSLSAEFKHLTLREQRCGNGGRANCDASLIVTEELHLITFETEVYHQGLKIDLETHSLPVVVISNICQMPNAWASILWYNMLTNNPKNVNFFTKPPIGTWDQVAEVLSWQFSSTTKRGLSIEQLTTLAEKLLGPGVNYSGCQITWAKFCKENMAGKGFSFWVWLDNIIDLVKKYILALWNEGYIMGFISKERERAILSTKPPGTCLLRFSESSKEGGVTFTWVEKDISGKTQIQSVEPYTKQQLNNMSFAEIIMGYKIMDATNILVSPLVYLYPDIPKEDAFGKYCRPESQEHPEADPGSAAPYLKTKFICVTPTTCSNTIDLPMSPRTLDSLMQFGNNGEAAEPSAGGQFESLTFDMELTSECATSPM</sequence>
<organism>
    <name type="scientific">Bos taurus</name>
    <name type="common">Bovine</name>
    <dbReference type="NCBI Taxonomy" id="9913"/>
    <lineage>
        <taxon>Eukaryota</taxon>
        <taxon>Metazoa</taxon>
        <taxon>Chordata</taxon>
        <taxon>Craniata</taxon>
        <taxon>Vertebrata</taxon>
        <taxon>Euteleostomi</taxon>
        <taxon>Mammalia</taxon>
        <taxon>Eutheria</taxon>
        <taxon>Laurasiatheria</taxon>
        <taxon>Artiodactyla</taxon>
        <taxon>Ruminantia</taxon>
        <taxon>Pecora</taxon>
        <taxon>Bovidae</taxon>
        <taxon>Bovinae</taxon>
        <taxon>Bos</taxon>
    </lineage>
</organism>
<name>STAT3_BOVIN</name>
<protein>
    <recommendedName>
        <fullName>Signal transducer and activator of transcription 3</fullName>
    </recommendedName>
</protein>
<dbReference type="EMBL" id="AJ620655">
    <property type="protein sequence ID" value="CAF06182.1"/>
    <property type="molecule type" value="mRNA"/>
</dbReference>
<dbReference type="RefSeq" id="NP_001012689.2">
    <property type="nucleotide sequence ID" value="NM_001012671.2"/>
</dbReference>
<dbReference type="SMR" id="P61635"/>
<dbReference type="CORUM" id="P61635"/>
<dbReference type="FunCoup" id="P61635">
    <property type="interactions" value="133"/>
</dbReference>
<dbReference type="STRING" id="9913.ENSBTAP00000028687"/>
<dbReference type="iPTMnet" id="P61635"/>
<dbReference type="PaxDb" id="9913-ENSBTAP00000028687"/>
<dbReference type="GeneID" id="508541"/>
<dbReference type="KEGG" id="bta:508541"/>
<dbReference type="CTD" id="6774"/>
<dbReference type="eggNOG" id="KOG3667">
    <property type="taxonomic scope" value="Eukaryota"/>
</dbReference>
<dbReference type="InParanoid" id="P61635"/>
<dbReference type="OrthoDB" id="19300at2759"/>
<dbReference type="Proteomes" id="UP000009136">
    <property type="component" value="Unplaced"/>
</dbReference>
<dbReference type="GO" id="GO:0005737">
    <property type="term" value="C:cytoplasm"/>
    <property type="evidence" value="ECO:0000250"/>
    <property type="project" value="UniProtKB"/>
</dbReference>
<dbReference type="GO" id="GO:0005634">
    <property type="term" value="C:nucleus"/>
    <property type="evidence" value="ECO:0000250"/>
    <property type="project" value="UniProtKB"/>
</dbReference>
<dbReference type="GO" id="GO:0005886">
    <property type="term" value="C:plasma membrane"/>
    <property type="evidence" value="ECO:0000250"/>
    <property type="project" value="UniProtKB"/>
</dbReference>
<dbReference type="GO" id="GO:0090575">
    <property type="term" value="C:RNA polymerase II transcription regulator complex"/>
    <property type="evidence" value="ECO:0000318"/>
    <property type="project" value="GO_Central"/>
</dbReference>
<dbReference type="GO" id="GO:0031490">
    <property type="term" value="F:chromatin DNA binding"/>
    <property type="evidence" value="ECO:0000250"/>
    <property type="project" value="UniProtKB"/>
</dbReference>
<dbReference type="GO" id="GO:0003677">
    <property type="term" value="F:DNA binding"/>
    <property type="evidence" value="ECO:0000250"/>
    <property type="project" value="UniProtKB"/>
</dbReference>
<dbReference type="GO" id="GO:0003700">
    <property type="term" value="F:DNA-binding transcription factor activity"/>
    <property type="evidence" value="ECO:0000250"/>
    <property type="project" value="UniProtKB"/>
</dbReference>
<dbReference type="GO" id="GO:0000981">
    <property type="term" value="F:DNA-binding transcription factor activity, RNA polymerase II-specific"/>
    <property type="evidence" value="ECO:0000250"/>
    <property type="project" value="UniProtKB"/>
</dbReference>
<dbReference type="GO" id="GO:0046983">
    <property type="term" value="F:protein dimerization activity"/>
    <property type="evidence" value="ECO:0000250"/>
    <property type="project" value="UniProtKB"/>
</dbReference>
<dbReference type="GO" id="GO:0042803">
    <property type="term" value="F:protein homodimerization activity"/>
    <property type="evidence" value="ECO:0000250"/>
    <property type="project" value="UniProtKB"/>
</dbReference>
<dbReference type="GO" id="GO:0019901">
    <property type="term" value="F:protein kinase binding"/>
    <property type="evidence" value="ECO:0000250"/>
    <property type="project" value="UniProtKB"/>
</dbReference>
<dbReference type="GO" id="GO:0000978">
    <property type="term" value="F:RNA polymerase II cis-regulatory region sequence-specific DNA binding"/>
    <property type="evidence" value="ECO:0000318"/>
    <property type="project" value="GO_Central"/>
</dbReference>
<dbReference type="GO" id="GO:0000976">
    <property type="term" value="F:transcription cis-regulatory region binding"/>
    <property type="evidence" value="ECO:0000250"/>
    <property type="project" value="UniProtKB"/>
</dbReference>
<dbReference type="GO" id="GO:0048708">
    <property type="term" value="P:astrocyte differentiation"/>
    <property type="evidence" value="ECO:0000250"/>
    <property type="project" value="UniProtKB"/>
</dbReference>
<dbReference type="GO" id="GO:0007259">
    <property type="term" value="P:cell surface receptor signaling pathway via JAK-STAT"/>
    <property type="evidence" value="ECO:0000318"/>
    <property type="project" value="GO_Central"/>
</dbReference>
<dbReference type="GO" id="GO:0044320">
    <property type="term" value="P:cellular response to leptin stimulus"/>
    <property type="evidence" value="ECO:0000250"/>
    <property type="project" value="UniProtKB"/>
</dbReference>
<dbReference type="GO" id="GO:0006952">
    <property type="term" value="P:defense response"/>
    <property type="evidence" value="ECO:0000318"/>
    <property type="project" value="GO_Central"/>
</dbReference>
<dbReference type="GO" id="GO:0042755">
    <property type="term" value="P:eating behavior"/>
    <property type="evidence" value="ECO:0000250"/>
    <property type="project" value="UniProtKB"/>
</dbReference>
<dbReference type="GO" id="GO:0097009">
    <property type="term" value="P:energy homeostasis"/>
    <property type="evidence" value="ECO:0000250"/>
    <property type="project" value="UniProtKB"/>
</dbReference>
<dbReference type="GO" id="GO:0001754">
    <property type="term" value="P:eye photoreceptor cell differentiation"/>
    <property type="evidence" value="ECO:0000250"/>
    <property type="project" value="UniProtKB"/>
</dbReference>
<dbReference type="GO" id="GO:0042593">
    <property type="term" value="P:glucose homeostasis"/>
    <property type="evidence" value="ECO:0000250"/>
    <property type="project" value="UniProtKB"/>
</dbReference>
<dbReference type="GO" id="GO:0060397">
    <property type="term" value="P:growth hormone receptor signaling pathway via JAK-STAT"/>
    <property type="evidence" value="ECO:0000250"/>
    <property type="project" value="UniProtKB"/>
</dbReference>
<dbReference type="GO" id="GO:0006954">
    <property type="term" value="P:inflammatory response"/>
    <property type="evidence" value="ECO:0000250"/>
    <property type="project" value="UniProtKB"/>
</dbReference>
<dbReference type="GO" id="GO:0070102">
    <property type="term" value="P:interleukin-6-mediated signaling pathway"/>
    <property type="evidence" value="ECO:0000250"/>
    <property type="project" value="UniProtKB"/>
</dbReference>
<dbReference type="GO" id="GO:0033210">
    <property type="term" value="P:leptin-mediated signaling pathway"/>
    <property type="evidence" value="ECO:0000250"/>
    <property type="project" value="UniProtKB"/>
</dbReference>
<dbReference type="GO" id="GO:0016310">
    <property type="term" value="P:phosphorylation"/>
    <property type="evidence" value="ECO:0000250"/>
    <property type="project" value="UniProtKB"/>
</dbReference>
<dbReference type="GO" id="GO:0045893">
    <property type="term" value="P:positive regulation of DNA-templated transcription"/>
    <property type="evidence" value="ECO:0000250"/>
    <property type="project" value="UniProtKB"/>
</dbReference>
<dbReference type="GO" id="GO:0045648">
    <property type="term" value="P:positive regulation of erythrocyte differentiation"/>
    <property type="evidence" value="ECO:0000250"/>
    <property type="project" value="UniProtKB"/>
</dbReference>
<dbReference type="GO" id="GO:0045747">
    <property type="term" value="P:positive regulation of Notch signaling pathway"/>
    <property type="evidence" value="ECO:0000250"/>
    <property type="project" value="UniProtKB"/>
</dbReference>
<dbReference type="GO" id="GO:0045944">
    <property type="term" value="P:positive regulation of transcription by RNA polymerase II"/>
    <property type="evidence" value="ECO:0000250"/>
    <property type="project" value="UniProtKB"/>
</dbReference>
<dbReference type="GO" id="GO:0006606">
    <property type="term" value="P:protein import into nucleus"/>
    <property type="evidence" value="ECO:0000250"/>
    <property type="project" value="UniProtKB"/>
</dbReference>
<dbReference type="GO" id="GO:0060019">
    <property type="term" value="P:radial glial cell differentiation"/>
    <property type="evidence" value="ECO:0000250"/>
    <property type="project" value="UniProtKB"/>
</dbReference>
<dbReference type="GO" id="GO:0051726">
    <property type="term" value="P:regulation of cell cycle"/>
    <property type="evidence" value="ECO:0000250"/>
    <property type="project" value="UniProtKB"/>
</dbReference>
<dbReference type="GO" id="GO:0042127">
    <property type="term" value="P:regulation of cell population proliferation"/>
    <property type="evidence" value="ECO:0000318"/>
    <property type="project" value="GO_Central"/>
</dbReference>
<dbReference type="GO" id="GO:0006355">
    <property type="term" value="P:regulation of DNA-templated transcription"/>
    <property type="evidence" value="ECO:0000250"/>
    <property type="project" value="UniProtKB"/>
</dbReference>
<dbReference type="GO" id="GO:0060259">
    <property type="term" value="P:regulation of feeding behavior"/>
    <property type="evidence" value="ECO:0000250"/>
    <property type="project" value="UniProtKB"/>
</dbReference>
<dbReference type="GO" id="GO:0006357">
    <property type="term" value="P:regulation of transcription by RNA polymerase II"/>
    <property type="evidence" value="ECO:0000250"/>
    <property type="project" value="UniProtKB"/>
</dbReference>
<dbReference type="GO" id="GO:0044321">
    <property type="term" value="P:response to leptin"/>
    <property type="evidence" value="ECO:0000250"/>
    <property type="project" value="UniProtKB"/>
</dbReference>
<dbReference type="GO" id="GO:0043434">
    <property type="term" value="P:response to peptide hormone"/>
    <property type="evidence" value="ECO:0000318"/>
    <property type="project" value="GO_Central"/>
</dbReference>
<dbReference type="GO" id="GO:0019953">
    <property type="term" value="P:sexual reproduction"/>
    <property type="evidence" value="ECO:0000250"/>
    <property type="project" value="UniProtKB"/>
</dbReference>
<dbReference type="GO" id="GO:0072540">
    <property type="term" value="P:T-helper 17 cell lineage commitment"/>
    <property type="evidence" value="ECO:0000250"/>
    <property type="project" value="UniProtKB"/>
</dbReference>
<dbReference type="GO" id="GO:0072538">
    <property type="term" value="P:T-helper 17 type immune response"/>
    <property type="evidence" value="ECO:0000250"/>
    <property type="project" value="UniProtKB"/>
</dbReference>
<dbReference type="GO" id="GO:0001659">
    <property type="term" value="P:temperature homeostasis"/>
    <property type="evidence" value="ECO:0000250"/>
    <property type="project" value="UniProtKB"/>
</dbReference>
<dbReference type="CDD" id="cd10374">
    <property type="entry name" value="SH2_STAT3"/>
    <property type="match status" value="1"/>
</dbReference>
<dbReference type="CDD" id="cd16853">
    <property type="entry name" value="STAT3_CCD"/>
    <property type="match status" value="1"/>
</dbReference>
<dbReference type="CDD" id="cd16847">
    <property type="entry name" value="STAT3_DBD"/>
    <property type="match status" value="1"/>
</dbReference>
<dbReference type="FunFam" id="1.10.238.10:FF:000012">
    <property type="entry name" value="Signal transducer and activator of transcription"/>
    <property type="match status" value="1"/>
</dbReference>
<dbReference type="FunFam" id="1.10.532.10:FF:000001">
    <property type="entry name" value="Signal transducer and activator of transcription"/>
    <property type="match status" value="1"/>
</dbReference>
<dbReference type="FunFam" id="1.20.1050.20:FF:000003">
    <property type="entry name" value="Signal transducer and activator of transcription"/>
    <property type="match status" value="1"/>
</dbReference>
<dbReference type="FunFam" id="3.30.505.10:FF:000003">
    <property type="entry name" value="Signal transducer and activator of transcription"/>
    <property type="match status" value="1"/>
</dbReference>
<dbReference type="FunFam" id="2.60.40.630:FF:000012">
    <property type="entry name" value="Signal transducer and activator of transcription 3"/>
    <property type="match status" value="1"/>
</dbReference>
<dbReference type="Gene3D" id="1.10.238.10">
    <property type="entry name" value="EF-hand"/>
    <property type="match status" value="1"/>
</dbReference>
<dbReference type="Gene3D" id="3.30.505.10">
    <property type="entry name" value="SH2 domain"/>
    <property type="match status" value="1"/>
</dbReference>
<dbReference type="Gene3D" id="1.20.1050.20">
    <property type="entry name" value="STAT transcription factor, all-alpha domain"/>
    <property type="match status" value="1"/>
</dbReference>
<dbReference type="Gene3D" id="2.60.40.630">
    <property type="entry name" value="STAT transcription factor, DNA-binding domain"/>
    <property type="match status" value="1"/>
</dbReference>
<dbReference type="Gene3D" id="1.10.532.10">
    <property type="entry name" value="STAT transcription factor, N-terminal domain"/>
    <property type="match status" value="1"/>
</dbReference>
<dbReference type="InterPro" id="IPR008967">
    <property type="entry name" value="p53-like_TF_DNA-bd_sf"/>
</dbReference>
<dbReference type="InterPro" id="IPR000980">
    <property type="entry name" value="SH2"/>
</dbReference>
<dbReference type="InterPro" id="IPR036860">
    <property type="entry name" value="SH2_dom_sf"/>
</dbReference>
<dbReference type="InterPro" id="IPR001217">
    <property type="entry name" value="STAT"/>
</dbReference>
<dbReference type="InterPro" id="IPR035855">
    <property type="entry name" value="STAT3_SH2"/>
</dbReference>
<dbReference type="InterPro" id="IPR048988">
    <property type="entry name" value="STAT_linker"/>
</dbReference>
<dbReference type="InterPro" id="IPR036535">
    <property type="entry name" value="STAT_N_sf"/>
</dbReference>
<dbReference type="InterPro" id="IPR013800">
    <property type="entry name" value="STAT_TF_alpha"/>
</dbReference>
<dbReference type="InterPro" id="IPR015988">
    <property type="entry name" value="STAT_TF_coiled-coil"/>
</dbReference>
<dbReference type="InterPro" id="IPR013801">
    <property type="entry name" value="STAT_TF_DNA-bd"/>
</dbReference>
<dbReference type="InterPro" id="IPR012345">
    <property type="entry name" value="STAT_TF_DNA-bd_N"/>
</dbReference>
<dbReference type="InterPro" id="IPR013799">
    <property type="entry name" value="STAT_TF_prot_interaction"/>
</dbReference>
<dbReference type="PANTHER" id="PTHR11801">
    <property type="entry name" value="SIGNAL TRANSDUCER AND ACTIVATOR OF TRANSCRIPTION"/>
    <property type="match status" value="1"/>
</dbReference>
<dbReference type="Pfam" id="PF00017">
    <property type="entry name" value="SH2"/>
    <property type="match status" value="1"/>
</dbReference>
<dbReference type="Pfam" id="PF01017">
    <property type="entry name" value="STAT_alpha"/>
    <property type="match status" value="1"/>
</dbReference>
<dbReference type="Pfam" id="PF02864">
    <property type="entry name" value="STAT_bind"/>
    <property type="match status" value="1"/>
</dbReference>
<dbReference type="Pfam" id="PF02865">
    <property type="entry name" value="STAT_int"/>
    <property type="match status" value="1"/>
</dbReference>
<dbReference type="Pfam" id="PF21354">
    <property type="entry name" value="STAT_linker"/>
    <property type="match status" value="1"/>
</dbReference>
<dbReference type="SMART" id="SM00964">
    <property type="entry name" value="STAT_int"/>
    <property type="match status" value="1"/>
</dbReference>
<dbReference type="SUPFAM" id="SSF49417">
    <property type="entry name" value="p53-like transcription factors"/>
    <property type="match status" value="1"/>
</dbReference>
<dbReference type="SUPFAM" id="SSF55550">
    <property type="entry name" value="SH2 domain"/>
    <property type="match status" value="1"/>
</dbReference>
<dbReference type="SUPFAM" id="SSF47655">
    <property type="entry name" value="STAT"/>
    <property type="match status" value="1"/>
</dbReference>
<dbReference type="SUPFAM" id="SSF48092">
    <property type="entry name" value="Transcription factor STAT-4 N-domain"/>
    <property type="match status" value="1"/>
</dbReference>
<dbReference type="PROSITE" id="PS50001">
    <property type="entry name" value="SH2"/>
    <property type="match status" value="1"/>
</dbReference>